<sequence>MLIRYKKSFEKIAMGLLSFMPNEKDLKQLQQTIKDYETDTDRQLFLWKEDEDIVGAIGVEKKDSEVEIRHISVNPSHRHQGIGKQMMDALKHLFKTQVLVPNELTQSFFERCQGQQDQDISYNN</sequence>
<dbReference type="EC" id="2.3.1.-"/>
<dbReference type="EMBL" id="L09228">
    <property type="protein sequence ID" value="AAA67485.1"/>
    <property type="molecule type" value="Genomic_DNA"/>
</dbReference>
<dbReference type="EMBL" id="X51510">
    <property type="protein sequence ID" value="CAA35882.1"/>
    <property type="molecule type" value="Genomic_DNA"/>
</dbReference>
<dbReference type="EMBL" id="AL009126">
    <property type="protein sequence ID" value="CAB14256.1"/>
    <property type="molecule type" value="Genomic_DNA"/>
</dbReference>
<dbReference type="PIR" id="S45547">
    <property type="entry name" value="S45547"/>
</dbReference>
<dbReference type="RefSeq" id="WP_003223910.1">
    <property type="nucleotide sequence ID" value="NZ_OZ025638.1"/>
</dbReference>
<dbReference type="PDB" id="5XXR">
    <property type="method" value="X-ray"/>
    <property type="resolution" value="2.65 A"/>
    <property type="chains" value="A/B=1-124"/>
</dbReference>
<dbReference type="PDB" id="5XXS">
    <property type="method" value="X-ray"/>
    <property type="resolution" value="2.09 A"/>
    <property type="chains" value="A/B=1-124"/>
</dbReference>
<dbReference type="PDBsum" id="5XXR"/>
<dbReference type="PDBsum" id="5XXS"/>
<dbReference type="SMR" id="P17622"/>
<dbReference type="FunCoup" id="P17622">
    <property type="interactions" value="26"/>
</dbReference>
<dbReference type="STRING" id="224308.BSU23240"/>
<dbReference type="jPOST" id="P17622"/>
<dbReference type="PaxDb" id="224308-BSU23240"/>
<dbReference type="EnsemblBacteria" id="CAB14256">
    <property type="protein sequence ID" value="CAB14256"/>
    <property type="gene ID" value="BSU_23240"/>
</dbReference>
<dbReference type="GeneID" id="76982939"/>
<dbReference type="GeneID" id="938948"/>
<dbReference type="KEGG" id="bsu:BSU23240"/>
<dbReference type="PATRIC" id="fig|224308.179.peg.2531"/>
<dbReference type="eggNOG" id="COG0456">
    <property type="taxonomic scope" value="Bacteria"/>
</dbReference>
<dbReference type="InParanoid" id="P17622"/>
<dbReference type="OrthoDB" id="2189687at2"/>
<dbReference type="PhylomeDB" id="P17622"/>
<dbReference type="BioCyc" id="BSUB:BSU23240-MONOMER"/>
<dbReference type="PRO" id="PR:P17622"/>
<dbReference type="Proteomes" id="UP000001570">
    <property type="component" value="Chromosome"/>
</dbReference>
<dbReference type="GO" id="GO:0016747">
    <property type="term" value="F:acyltransferase activity, transferring groups other than amino-acyl groups"/>
    <property type="evidence" value="ECO:0007669"/>
    <property type="project" value="InterPro"/>
</dbReference>
<dbReference type="GO" id="GO:0009231">
    <property type="term" value="P:riboflavin biosynthetic process"/>
    <property type="evidence" value="ECO:0007669"/>
    <property type="project" value="UniProtKB-KW"/>
</dbReference>
<dbReference type="CDD" id="cd04301">
    <property type="entry name" value="NAT_SF"/>
    <property type="match status" value="1"/>
</dbReference>
<dbReference type="Gene3D" id="3.40.630.30">
    <property type="match status" value="1"/>
</dbReference>
<dbReference type="InterPro" id="IPR016181">
    <property type="entry name" value="Acyl_CoA_acyltransferase"/>
</dbReference>
<dbReference type="InterPro" id="IPR000182">
    <property type="entry name" value="GNAT_dom"/>
</dbReference>
<dbReference type="PANTHER" id="PTHR43800">
    <property type="entry name" value="PEPTIDYL-LYSINE N-ACETYLTRANSFERASE YJAB"/>
    <property type="match status" value="1"/>
</dbReference>
<dbReference type="PANTHER" id="PTHR43800:SF1">
    <property type="entry name" value="PEPTIDYL-LYSINE N-ACETYLTRANSFERASE YJAB"/>
    <property type="match status" value="1"/>
</dbReference>
<dbReference type="Pfam" id="PF00583">
    <property type="entry name" value="Acetyltransf_1"/>
    <property type="match status" value="1"/>
</dbReference>
<dbReference type="SUPFAM" id="SSF55729">
    <property type="entry name" value="Acyl-CoA N-acyltransferases (Nat)"/>
    <property type="match status" value="1"/>
</dbReference>
<dbReference type="PROSITE" id="PS51186">
    <property type="entry name" value="GNAT"/>
    <property type="match status" value="1"/>
</dbReference>
<name>RIBT_BACSU</name>
<proteinExistence type="evidence at protein level"/>
<accession>P17622</accession>
<comment type="function">
    <text>Involved in riboflavin biosynthesis.</text>
</comment>
<evidence type="ECO:0000255" key="1">
    <source>
        <dbReference type="PROSITE-ProRule" id="PRU00532"/>
    </source>
</evidence>
<evidence type="ECO:0007829" key="2">
    <source>
        <dbReference type="PDB" id="5XXR"/>
    </source>
</evidence>
<evidence type="ECO:0007829" key="3">
    <source>
        <dbReference type="PDB" id="5XXS"/>
    </source>
</evidence>
<protein>
    <recommendedName>
        <fullName>Protein RibT</fullName>
        <ecNumber>2.3.1.-</ecNumber>
    </recommendedName>
</protein>
<keyword id="KW-0002">3D-structure</keyword>
<keyword id="KW-0012">Acyltransferase</keyword>
<keyword id="KW-1185">Reference proteome</keyword>
<keyword id="KW-0686">Riboflavin biosynthesis</keyword>
<keyword id="KW-0808">Transferase</keyword>
<feature type="chain" id="PRO_0000097330" description="Protein RibT">
    <location>
        <begin position="1"/>
        <end position="124"/>
    </location>
</feature>
<feature type="domain" description="N-acetyltransferase" evidence="1">
    <location>
        <begin position="3"/>
        <end position="124"/>
    </location>
</feature>
<feature type="strand" evidence="3">
    <location>
        <begin position="2"/>
        <end position="4"/>
    </location>
</feature>
<feature type="helix" evidence="3">
    <location>
        <begin position="7"/>
        <end position="9"/>
    </location>
</feature>
<feature type="helix" evidence="3">
    <location>
        <begin position="10"/>
        <end position="17"/>
    </location>
</feature>
<feature type="helix" evidence="3">
    <location>
        <begin position="26"/>
        <end position="38"/>
    </location>
</feature>
<feature type="strand" evidence="3">
    <location>
        <begin position="42"/>
        <end position="49"/>
    </location>
</feature>
<feature type="strand" evidence="3">
    <location>
        <begin position="52"/>
        <end position="62"/>
    </location>
</feature>
<feature type="strand" evidence="3">
    <location>
        <begin position="65"/>
        <end position="73"/>
    </location>
</feature>
<feature type="helix" evidence="3">
    <location>
        <begin position="75"/>
        <end position="77"/>
    </location>
</feature>
<feature type="strand" evidence="2">
    <location>
        <begin position="79"/>
        <end position="81"/>
    </location>
</feature>
<feature type="helix" evidence="3">
    <location>
        <begin position="82"/>
        <end position="93"/>
    </location>
</feature>
<feature type="turn" evidence="3">
    <location>
        <begin position="94"/>
        <end position="96"/>
    </location>
</feature>
<feature type="strand" evidence="3">
    <location>
        <begin position="97"/>
        <end position="101"/>
    </location>
</feature>
<feature type="turn" evidence="3">
    <location>
        <begin position="103"/>
        <end position="105"/>
    </location>
</feature>
<feature type="helix" evidence="3">
    <location>
        <begin position="106"/>
        <end position="113"/>
    </location>
</feature>
<gene>
    <name type="primary">ribT</name>
    <name type="ordered locus">BSU23240</name>
</gene>
<reference key="1">
    <citation type="journal article" date="1993" name="Mol. Microbiol.">
        <title>The organization of the Bacillus subtilis 168 chromosome region between the spoVA and serA genetic loci, based on sequence data.</title>
        <authorList>
            <person name="Sorokin A.V."/>
            <person name="Zumstein E."/>
            <person name="Azevedo V."/>
            <person name="Ehrlich S.D."/>
            <person name="Serror P."/>
        </authorList>
    </citation>
    <scope>NUCLEOTIDE SEQUENCE [GENOMIC DNA]</scope>
    <source>
        <strain>168 / Marburg / ATCC 6051 / DSM 10 / JCM 1465 / NBRC 13719 / NCIMB 3610 / NRRL NRS-744 / VKM B-501</strain>
    </source>
</reference>
<reference key="2">
    <citation type="thesis" date="1989" institute="USSR Academy of Sciences" country="Russia">
        <authorList>
            <person name="Mironov V.N."/>
        </authorList>
    </citation>
    <scope>NUCLEOTIDE SEQUENCE [GENOMIC DNA]</scope>
    <source>
        <strain>168 / SHGW</strain>
    </source>
</reference>
<reference key="3">
    <citation type="journal article" date="1997" name="Nature">
        <title>The complete genome sequence of the Gram-positive bacterium Bacillus subtilis.</title>
        <authorList>
            <person name="Kunst F."/>
            <person name="Ogasawara N."/>
            <person name="Moszer I."/>
            <person name="Albertini A.M."/>
            <person name="Alloni G."/>
            <person name="Azevedo V."/>
            <person name="Bertero M.G."/>
            <person name="Bessieres P."/>
            <person name="Bolotin A."/>
            <person name="Borchert S."/>
            <person name="Borriss R."/>
            <person name="Boursier L."/>
            <person name="Brans A."/>
            <person name="Braun M."/>
            <person name="Brignell S.C."/>
            <person name="Bron S."/>
            <person name="Brouillet S."/>
            <person name="Bruschi C.V."/>
            <person name="Caldwell B."/>
            <person name="Capuano V."/>
            <person name="Carter N.M."/>
            <person name="Choi S.-K."/>
            <person name="Codani J.-J."/>
            <person name="Connerton I.F."/>
            <person name="Cummings N.J."/>
            <person name="Daniel R.A."/>
            <person name="Denizot F."/>
            <person name="Devine K.M."/>
            <person name="Duesterhoeft A."/>
            <person name="Ehrlich S.D."/>
            <person name="Emmerson P.T."/>
            <person name="Entian K.-D."/>
            <person name="Errington J."/>
            <person name="Fabret C."/>
            <person name="Ferrari E."/>
            <person name="Foulger D."/>
            <person name="Fritz C."/>
            <person name="Fujita M."/>
            <person name="Fujita Y."/>
            <person name="Fuma S."/>
            <person name="Galizzi A."/>
            <person name="Galleron N."/>
            <person name="Ghim S.-Y."/>
            <person name="Glaser P."/>
            <person name="Goffeau A."/>
            <person name="Golightly E.J."/>
            <person name="Grandi G."/>
            <person name="Guiseppi G."/>
            <person name="Guy B.J."/>
            <person name="Haga K."/>
            <person name="Haiech J."/>
            <person name="Harwood C.R."/>
            <person name="Henaut A."/>
            <person name="Hilbert H."/>
            <person name="Holsappel S."/>
            <person name="Hosono S."/>
            <person name="Hullo M.-F."/>
            <person name="Itaya M."/>
            <person name="Jones L.-M."/>
            <person name="Joris B."/>
            <person name="Karamata D."/>
            <person name="Kasahara Y."/>
            <person name="Klaerr-Blanchard M."/>
            <person name="Klein C."/>
            <person name="Kobayashi Y."/>
            <person name="Koetter P."/>
            <person name="Koningstein G."/>
            <person name="Krogh S."/>
            <person name="Kumano M."/>
            <person name="Kurita K."/>
            <person name="Lapidus A."/>
            <person name="Lardinois S."/>
            <person name="Lauber J."/>
            <person name="Lazarevic V."/>
            <person name="Lee S.-M."/>
            <person name="Levine A."/>
            <person name="Liu H."/>
            <person name="Masuda S."/>
            <person name="Mauel C."/>
            <person name="Medigue C."/>
            <person name="Medina N."/>
            <person name="Mellado R.P."/>
            <person name="Mizuno M."/>
            <person name="Moestl D."/>
            <person name="Nakai S."/>
            <person name="Noback M."/>
            <person name="Noone D."/>
            <person name="O'Reilly M."/>
            <person name="Ogawa K."/>
            <person name="Ogiwara A."/>
            <person name="Oudega B."/>
            <person name="Park S.-H."/>
            <person name="Parro V."/>
            <person name="Pohl T.M."/>
            <person name="Portetelle D."/>
            <person name="Porwollik S."/>
            <person name="Prescott A.M."/>
            <person name="Presecan E."/>
            <person name="Pujic P."/>
            <person name="Purnelle B."/>
            <person name="Rapoport G."/>
            <person name="Rey M."/>
            <person name="Reynolds S."/>
            <person name="Rieger M."/>
            <person name="Rivolta C."/>
            <person name="Rocha E."/>
            <person name="Roche B."/>
            <person name="Rose M."/>
            <person name="Sadaie Y."/>
            <person name="Sato T."/>
            <person name="Scanlan E."/>
            <person name="Schleich S."/>
            <person name="Schroeter R."/>
            <person name="Scoffone F."/>
            <person name="Sekiguchi J."/>
            <person name="Sekowska A."/>
            <person name="Seror S.J."/>
            <person name="Serror P."/>
            <person name="Shin B.-S."/>
            <person name="Soldo B."/>
            <person name="Sorokin A."/>
            <person name="Tacconi E."/>
            <person name="Takagi T."/>
            <person name="Takahashi H."/>
            <person name="Takemaru K."/>
            <person name="Takeuchi M."/>
            <person name="Tamakoshi A."/>
            <person name="Tanaka T."/>
            <person name="Terpstra P."/>
            <person name="Tognoni A."/>
            <person name="Tosato V."/>
            <person name="Uchiyama S."/>
            <person name="Vandenbol M."/>
            <person name="Vannier F."/>
            <person name="Vassarotti A."/>
            <person name="Viari A."/>
            <person name="Wambutt R."/>
            <person name="Wedler E."/>
            <person name="Wedler H."/>
            <person name="Weitzenegger T."/>
            <person name="Winters P."/>
            <person name="Wipat A."/>
            <person name="Yamamoto H."/>
            <person name="Yamane K."/>
            <person name="Yasumoto K."/>
            <person name="Yata K."/>
            <person name="Yoshida K."/>
            <person name="Yoshikawa H.-F."/>
            <person name="Zumstein E."/>
            <person name="Yoshikawa H."/>
            <person name="Danchin A."/>
        </authorList>
    </citation>
    <scope>NUCLEOTIDE SEQUENCE [LARGE SCALE GENOMIC DNA]</scope>
    <source>
        <strain>168</strain>
    </source>
</reference>
<organism>
    <name type="scientific">Bacillus subtilis (strain 168)</name>
    <dbReference type="NCBI Taxonomy" id="224308"/>
    <lineage>
        <taxon>Bacteria</taxon>
        <taxon>Bacillati</taxon>
        <taxon>Bacillota</taxon>
        <taxon>Bacilli</taxon>
        <taxon>Bacillales</taxon>
        <taxon>Bacillaceae</taxon>
        <taxon>Bacillus</taxon>
    </lineage>
</organism>